<sequence length="400" mass="43771">MATGGGAEEESQRGRPQLPLPARPVARVEEPEGVREKMGWAQVVKNLAEKKGDFREPRRRDETGSGASGGLGSPGGLATPNPGDFPPAARGDPKGRRRDPTGEASDAYRKKSASGAGDPSRRKKAEVTAAMATPARPGTTEDATERPLQDEPPAAGPGKGRFLVRICFQGDESACPTRDFVVGALILRSIGMDPDDIYAVIQIPGSREFDVSFRSAEKLALFLRVYEEKRELEDCWENFVVLGRSRSSLKTLFILFRNETVDVEDIVTWLKRHCDVLAVPVKVTDRFGIWTGEYKCEIELRQGEGGVRHLPGAFFLGAERGYSWYKGQPKTCFKCGSRTHMSGTCTQDRCFRCGEEGHLSPYCRKVIVCNLCGKRGHAFAQCPKAVHNSVTAQLTSVAGH</sequence>
<gene>
    <name evidence="7" type="primary">Zcchc3</name>
</gene>
<accession>Q8BPK2</accession>
<evidence type="ECO:0000250" key="1">
    <source>
        <dbReference type="UniProtKB" id="Q9NUD5"/>
    </source>
</evidence>
<evidence type="ECO:0000255" key="2">
    <source>
        <dbReference type="PROSITE-ProRule" id="PRU00047"/>
    </source>
</evidence>
<evidence type="ECO:0000256" key="3">
    <source>
        <dbReference type="SAM" id="MobiDB-lite"/>
    </source>
</evidence>
<evidence type="ECO:0000269" key="4">
    <source>
    </source>
</evidence>
<evidence type="ECO:0000269" key="5">
    <source>
    </source>
</evidence>
<evidence type="ECO:0000305" key="6"/>
<evidence type="ECO:0000312" key="7">
    <source>
        <dbReference type="MGI" id="MGI:1915167"/>
    </source>
</evidence>
<reference key="1">
    <citation type="journal article" date="2005" name="Science">
        <title>The transcriptional landscape of the mammalian genome.</title>
        <authorList>
            <person name="Carninci P."/>
            <person name="Kasukawa T."/>
            <person name="Katayama S."/>
            <person name="Gough J."/>
            <person name="Frith M.C."/>
            <person name="Maeda N."/>
            <person name="Oyama R."/>
            <person name="Ravasi T."/>
            <person name="Lenhard B."/>
            <person name="Wells C."/>
            <person name="Kodzius R."/>
            <person name="Shimokawa K."/>
            <person name="Bajic V.B."/>
            <person name="Brenner S.E."/>
            <person name="Batalov S."/>
            <person name="Forrest A.R."/>
            <person name="Zavolan M."/>
            <person name="Davis M.J."/>
            <person name="Wilming L.G."/>
            <person name="Aidinis V."/>
            <person name="Allen J.E."/>
            <person name="Ambesi-Impiombato A."/>
            <person name="Apweiler R."/>
            <person name="Aturaliya R.N."/>
            <person name="Bailey T.L."/>
            <person name="Bansal M."/>
            <person name="Baxter L."/>
            <person name="Beisel K.W."/>
            <person name="Bersano T."/>
            <person name="Bono H."/>
            <person name="Chalk A.M."/>
            <person name="Chiu K.P."/>
            <person name="Choudhary V."/>
            <person name="Christoffels A."/>
            <person name="Clutterbuck D.R."/>
            <person name="Crowe M.L."/>
            <person name="Dalla E."/>
            <person name="Dalrymple B.P."/>
            <person name="de Bono B."/>
            <person name="Della Gatta G."/>
            <person name="di Bernardo D."/>
            <person name="Down T."/>
            <person name="Engstrom P."/>
            <person name="Fagiolini M."/>
            <person name="Faulkner G."/>
            <person name="Fletcher C.F."/>
            <person name="Fukushima T."/>
            <person name="Furuno M."/>
            <person name="Futaki S."/>
            <person name="Gariboldi M."/>
            <person name="Georgii-Hemming P."/>
            <person name="Gingeras T.R."/>
            <person name="Gojobori T."/>
            <person name="Green R.E."/>
            <person name="Gustincich S."/>
            <person name="Harbers M."/>
            <person name="Hayashi Y."/>
            <person name="Hensch T.K."/>
            <person name="Hirokawa N."/>
            <person name="Hill D."/>
            <person name="Huminiecki L."/>
            <person name="Iacono M."/>
            <person name="Ikeo K."/>
            <person name="Iwama A."/>
            <person name="Ishikawa T."/>
            <person name="Jakt M."/>
            <person name="Kanapin A."/>
            <person name="Katoh M."/>
            <person name="Kawasawa Y."/>
            <person name="Kelso J."/>
            <person name="Kitamura H."/>
            <person name="Kitano H."/>
            <person name="Kollias G."/>
            <person name="Krishnan S.P."/>
            <person name="Kruger A."/>
            <person name="Kummerfeld S.K."/>
            <person name="Kurochkin I.V."/>
            <person name="Lareau L.F."/>
            <person name="Lazarevic D."/>
            <person name="Lipovich L."/>
            <person name="Liu J."/>
            <person name="Liuni S."/>
            <person name="McWilliam S."/>
            <person name="Madan Babu M."/>
            <person name="Madera M."/>
            <person name="Marchionni L."/>
            <person name="Matsuda H."/>
            <person name="Matsuzawa S."/>
            <person name="Miki H."/>
            <person name="Mignone F."/>
            <person name="Miyake S."/>
            <person name="Morris K."/>
            <person name="Mottagui-Tabar S."/>
            <person name="Mulder N."/>
            <person name="Nakano N."/>
            <person name="Nakauchi H."/>
            <person name="Ng P."/>
            <person name="Nilsson R."/>
            <person name="Nishiguchi S."/>
            <person name="Nishikawa S."/>
            <person name="Nori F."/>
            <person name="Ohara O."/>
            <person name="Okazaki Y."/>
            <person name="Orlando V."/>
            <person name="Pang K.C."/>
            <person name="Pavan W.J."/>
            <person name="Pavesi G."/>
            <person name="Pesole G."/>
            <person name="Petrovsky N."/>
            <person name="Piazza S."/>
            <person name="Reed J."/>
            <person name="Reid J.F."/>
            <person name="Ring B.Z."/>
            <person name="Ringwald M."/>
            <person name="Rost B."/>
            <person name="Ruan Y."/>
            <person name="Salzberg S.L."/>
            <person name="Sandelin A."/>
            <person name="Schneider C."/>
            <person name="Schoenbach C."/>
            <person name="Sekiguchi K."/>
            <person name="Semple C.A."/>
            <person name="Seno S."/>
            <person name="Sessa L."/>
            <person name="Sheng Y."/>
            <person name="Shibata Y."/>
            <person name="Shimada H."/>
            <person name="Shimada K."/>
            <person name="Silva D."/>
            <person name="Sinclair B."/>
            <person name="Sperling S."/>
            <person name="Stupka E."/>
            <person name="Sugiura K."/>
            <person name="Sultana R."/>
            <person name="Takenaka Y."/>
            <person name="Taki K."/>
            <person name="Tammoja K."/>
            <person name="Tan S.L."/>
            <person name="Tang S."/>
            <person name="Taylor M.S."/>
            <person name="Tegner J."/>
            <person name="Teichmann S.A."/>
            <person name="Ueda H.R."/>
            <person name="van Nimwegen E."/>
            <person name="Verardo R."/>
            <person name="Wei C.L."/>
            <person name="Yagi K."/>
            <person name="Yamanishi H."/>
            <person name="Zabarovsky E."/>
            <person name="Zhu S."/>
            <person name="Zimmer A."/>
            <person name="Hide W."/>
            <person name="Bult C."/>
            <person name="Grimmond S.M."/>
            <person name="Teasdale R.D."/>
            <person name="Liu E.T."/>
            <person name="Brusic V."/>
            <person name="Quackenbush J."/>
            <person name="Wahlestedt C."/>
            <person name="Mattick J.S."/>
            <person name="Hume D.A."/>
            <person name="Kai C."/>
            <person name="Sasaki D."/>
            <person name="Tomaru Y."/>
            <person name="Fukuda S."/>
            <person name="Kanamori-Katayama M."/>
            <person name="Suzuki M."/>
            <person name="Aoki J."/>
            <person name="Arakawa T."/>
            <person name="Iida J."/>
            <person name="Imamura K."/>
            <person name="Itoh M."/>
            <person name="Kato T."/>
            <person name="Kawaji H."/>
            <person name="Kawagashira N."/>
            <person name="Kawashima T."/>
            <person name="Kojima M."/>
            <person name="Kondo S."/>
            <person name="Konno H."/>
            <person name="Nakano K."/>
            <person name="Ninomiya N."/>
            <person name="Nishio T."/>
            <person name="Okada M."/>
            <person name="Plessy C."/>
            <person name="Shibata K."/>
            <person name="Shiraki T."/>
            <person name="Suzuki S."/>
            <person name="Tagami M."/>
            <person name="Waki K."/>
            <person name="Watahiki A."/>
            <person name="Okamura-Oho Y."/>
            <person name="Suzuki H."/>
            <person name="Kawai J."/>
            <person name="Hayashizaki Y."/>
        </authorList>
    </citation>
    <scope>NUCLEOTIDE SEQUENCE [LARGE SCALE MRNA]</scope>
    <source>
        <strain>C57BL/6J</strain>
        <tissue>Eye</tissue>
    </source>
</reference>
<reference key="2">
    <citation type="journal article" date="2009" name="PLoS Biol.">
        <title>Lineage-specific biology revealed by a finished genome assembly of the mouse.</title>
        <authorList>
            <person name="Church D.M."/>
            <person name="Goodstadt L."/>
            <person name="Hillier L.W."/>
            <person name="Zody M.C."/>
            <person name="Goldstein S."/>
            <person name="She X."/>
            <person name="Bult C.J."/>
            <person name="Agarwala R."/>
            <person name="Cherry J.L."/>
            <person name="DiCuccio M."/>
            <person name="Hlavina W."/>
            <person name="Kapustin Y."/>
            <person name="Meric P."/>
            <person name="Maglott D."/>
            <person name="Birtle Z."/>
            <person name="Marques A.C."/>
            <person name="Graves T."/>
            <person name="Zhou S."/>
            <person name="Teague B."/>
            <person name="Potamousis K."/>
            <person name="Churas C."/>
            <person name="Place M."/>
            <person name="Herschleb J."/>
            <person name="Runnheim R."/>
            <person name="Forrest D."/>
            <person name="Amos-Landgraf J."/>
            <person name="Schwartz D.C."/>
            <person name="Cheng Z."/>
            <person name="Lindblad-Toh K."/>
            <person name="Eichler E.E."/>
            <person name="Ponting C.P."/>
        </authorList>
    </citation>
    <scope>NUCLEOTIDE SEQUENCE [LARGE SCALE GENOMIC DNA]</scope>
    <source>
        <strain>C57BL/6J</strain>
    </source>
</reference>
<reference key="3">
    <citation type="journal article" date="2004" name="Genome Res.">
        <title>The status, quality, and expansion of the NIH full-length cDNA project: the Mammalian Gene Collection (MGC).</title>
        <authorList>
            <consortium name="The MGC Project Team"/>
        </authorList>
    </citation>
    <scope>NUCLEOTIDE SEQUENCE [LARGE SCALE MRNA]</scope>
    <source>
        <strain>C57BL/6J</strain>
        <tissue>Brain</tissue>
    </source>
</reference>
<reference key="4">
    <citation type="journal article" date="2018" name="Immunity">
        <title>The zinc-finger protein ZCCHC3 binds RNA and facilitates viral RNA sensing and activation of the RIG-I-like receptors.</title>
        <authorList>
            <person name="Lian H."/>
            <person name="Zang R."/>
            <person name="Wei J."/>
            <person name="Ye W."/>
            <person name="Hu M.M."/>
            <person name="Chen Y.D."/>
            <person name="Zhang X.N."/>
            <person name="Guo Y."/>
            <person name="Lei C.Q."/>
            <person name="Yang Q."/>
            <person name="Luo W.W."/>
            <person name="Li S."/>
            <person name="Shu H.B."/>
        </authorList>
    </citation>
    <scope>FUNCTION</scope>
    <scope>DISRUPTION PHENOTYPE</scope>
</reference>
<reference key="5">
    <citation type="journal article" date="2018" name="Nat. Commun.">
        <title>ZCCHC3 is a co-sensor of cGAS for dsDNA recognition in innate immune response.</title>
        <authorList>
            <person name="Lian H."/>
            <person name="Wei J."/>
            <person name="Zang R."/>
            <person name="Ye W."/>
            <person name="Yang Q."/>
            <person name="Zhang X.N."/>
            <person name="Chen Y.D."/>
            <person name="Fu Y.Z."/>
            <person name="Hu M.M."/>
            <person name="Lei C.Q."/>
            <person name="Luo W.W."/>
            <person name="Li S."/>
            <person name="Shu H.B."/>
        </authorList>
    </citation>
    <scope>FUNCTION</scope>
    <scope>DISRUPTION PHENOTYPE</scope>
</reference>
<keyword id="KW-0051">Antiviral defense</keyword>
<keyword id="KW-0963">Cytoplasm</keyword>
<keyword id="KW-0238">DNA-binding</keyword>
<keyword id="KW-0391">Immunity</keyword>
<keyword id="KW-0399">Innate immunity</keyword>
<keyword id="KW-0479">Metal-binding</keyword>
<keyword id="KW-0597">Phosphoprotein</keyword>
<keyword id="KW-1185">Reference proteome</keyword>
<keyword id="KW-0677">Repeat</keyword>
<keyword id="KW-0694">RNA-binding</keyword>
<keyword id="KW-0862">Zinc</keyword>
<keyword id="KW-0863">Zinc-finger</keyword>
<feature type="chain" id="PRO_0000446169" description="Zinc finger CCHC domain-containing protein 3">
    <location>
        <begin position="1"/>
        <end position="400"/>
    </location>
</feature>
<feature type="zinc finger region" description="CCHC-type 1" evidence="2">
    <location>
        <begin position="349"/>
        <end position="365"/>
    </location>
</feature>
<feature type="zinc finger region" description="CCHC-type 2" evidence="2">
    <location>
        <begin position="369"/>
        <end position="384"/>
    </location>
</feature>
<feature type="region of interest" description="Disordered" evidence="3">
    <location>
        <begin position="1"/>
        <end position="157"/>
    </location>
</feature>
<feature type="compositionally biased region" description="Basic and acidic residues" evidence="3">
    <location>
        <begin position="26"/>
        <end position="38"/>
    </location>
</feature>
<feature type="compositionally biased region" description="Basic and acidic residues" evidence="3">
    <location>
        <begin position="47"/>
        <end position="63"/>
    </location>
</feature>
<feature type="compositionally biased region" description="Gly residues" evidence="3">
    <location>
        <begin position="66"/>
        <end position="75"/>
    </location>
</feature>
<feature type="compositionally biased region" description="Basic and acidic residues" evidence="3">
    <location>
        <begin position="91"/>
        <end position="109"/>
    </location>
</feature>
<feature type="modified residue" description="Phosphotyrosine" evidence="1">
    <location>
        <position position="198"/>
    </location>
</feature>
<name>ZCHC3_MOUSE</name>
<protein>
    <recommendedName>
        <fullName evidence="6">Zinc finger CCHC domain-containing protein 3</fullName>
    </recommendedName>
</protein>
<comment type="function">
    <text evidence="1 4 5">Nucleic acid-binding protein involved in innate immune response to DNA and RNA viruses (PubMed:30135424, PubMed:30193849). Binds DNA and RNA in the cytoplasm and acts by promoting recognition of viral nucleic acids by virus sensors, such as RIGI, IFIH1/MDA5 and CGAS (PubMed:30135424, PubMed:30193849). Acts as a co-sensor for recognition of double-stranded DNA (dsDNA) by cGAS in the cytoplasm, thereby playing a role in innate immune response to cytosolic dsDNA and DNA virus (By similarity). Binds dsDNA and probably acts by promoting sensing of dsDNA by CGAS, leading to enhance CGAS oligomerization and activation (By similarity). Promotes sensing of viral RNA by RIG-I-like receptors proteins RIGI and IFIH1/MDA5 via two mechanisms: binds double-stranded RNA (dsRNA), enhancing the binding of RIGI and IFIH1/MDA5 to dsRNA and promotes 'Lys-63'-linked ubiquitination and subsequent activation of RIGI and IFIH1/MDA5 (By similarity).</text>
</comment>
<comment type="subunit">
    <text evidence="1">Interacts with CGAS (By similarity). Interacts with RIGI (By similarity). Interacts with IFIH1/MDA5 (By similarity).</text>
</comment>
<comment type="subcellular location">
    <subcellularLocation>
        <location evidence="1">Cytoplasm</location>
    </subcellularLocation>
</comment>
<comment type="disruption phenotype">
    <text evidence="4 5">Mice were born at the Mendelian ratio and do not show defects in development and immune cell differentiation (PubMed:30193849). Mice are however more susceptible to DNA and RNA virus infection (PubMed:30135424, PubMed:30193849).</text>
</comment>
<dbReference type="EMBL" id="AK053859">
    <property type="protein sequence ID" value="BAC35560.1"/>
    <property type="molecule type" value="mRNA"/>
</dbReference>
<dbReference type="EMBL" id="AL928568">
    <property type="status" value="NOT_ANNOTATED_CDS"/>
    <property type="molecule type" value="Genomic_DNA"/>
</dbReference>
<dbReference type="EMBL" id="BC055755">
    <property type="protein sequence ID" value="AAH55755.1"/>
    <property type="molecule type" value="mRNA"/>
</dbReference>
<dbReference type="CCDS" id="CCDS16884.1"/>
<dbReference type="RefSeq" id="NP_780335.1">
    <property type="nucleotide sequence ID" value="NM_175126.5"/>
</dbReference>
<dbReference type="FunCoup" id="Q8BPK2">
    <property type="interactions" value="231"/>
</dbReference>
<dbReference type="STRING" id="10090.ENSMUSP00000096813"/>
<dbReference type="GlyGen" id="Q8BPK2">
    <property type="glycosylation" value="1 site"/>
</dbReference>
<dbReference type="iPTMnet" id="Q8BPK2"/>
<dbReference type="PhosphoSitePlus" id="Q8BPK2"/>
<dbReference type="PaxDb" id="10090-ENSMUSP00000096813"/>
<dbReference type="PeptideAtlas" id="Q8BPK2"/>
<dbReference type="ProteomicsDB" id="342707"/>
<dbReference type="Antibodypedia" id="72721">
    <property type="antibodies" value="61 antibodies from 21 providers"/>
</dbReference>
<dbReference type="DNASU" id="67917"/>
<dbReference type="Ensembl" id="ENSMUST00000099207.5">
    <property type="protein sequence ID" value="ENSMUSP00000096813.4"/>
    <property type="gene ID" value="ENSMUSG00000074682.5"/>
</dbReference>
<dbReference type="GeneID" id="67917"/>
<dbReference type="KEGG" id="mmu:67917"/>
<dbReference type="UCSC" id="uc008nfj.2">
    <property type="organism name" value="mouse"/>
</dbReference>
<dbReference type="AGR" id="MGI:1915167"/>
<dbReference type="CTD" id="85364"/>
<dbReference type="MGI" id="MGI:1915167">
    <property type="gene designation" value="Zcchc3"/>
</dbReference>
<dbReference type="VEuPathDB" id="HostDB:ENSMUSG00000074682"/>
<dbReference type="eggNOG" id="KOG4400">
    <property type="taxonomic scope" value="Eukaryota"/>
</dbReference>
<dbReference type="GeneTree" id="ENSGT00530000063983"/>
<dbReference type="HOGENOM" id="CLU_723532_0_0_1"/>
<dbReference type="InParanoid" id="Q8BPK2"/>
<dbReference type="OMA" id="QGDESAC"/>
<dbReference type="OrthoDB" id="3863715at2759"/>
<dbReference type="PhylomeDB" id="Q8BPK2"/>
<dbReference type="TreeFam" id="TF334042"/>
<dbReference type="BioGRID-ORCS" id="67917">
    <property type="hits" value="4 hits in 77 CRISPR screens"/>
</dbReference>
<dbReference type="ChiTaRS" id="Zcchc3">
    <property type="organism name" value="mouse"/>
</dbReference>
<dbReference type="PRO" id="PR:Q8BPK2"/>
<dbReference type="Proteomes" id="UP000000589">
    <property type="component" value="Chromosome 2"/>
</dbReference>
<dbReference type="RNAct" id="Q8BPK2">
    <property type="molecule type" value="protein"/>
</dbReference>
<dbReference type="Bgee" id="ENSMUSG00000074682">
    <property type="expression patterns" value="Expressed in animal zygote and 262 other cell types or tissues"/>
</dbReference>
<dbReference type="GO" id="GO:0005737">
    <property type="term" value="C:cytoplasm"/>
    <property type="evidence" value="ECO:0000250"/>
    <property type="project" value="UniProtKB"/>
</dbReference>
<dbReference type="GO" id="GO:0003690">
    <property type="term" value="F:double-stranded DNA binding"/>
    <property type="evidence" value="ECO:0000250"/>
    <property type="project" value="UniProtKB"/>
</dbReference>
<dbReference type="GO" id="GO:0003723">
    <property type="term" value="F:RNA binding"/>
    <property type="evidence" value="ECO:0007669"/>
    <property type="project" value="UniProtKB-KW"/>
</dbReference>
<dbReference type="GO" id="GO:0008270">
    <property type="term" value="F:zinc ion binding"/>
    <property type="evidence" value="ECO:0007669"/>
    <property type="project" value="UniProtKB-KW"/>
</dbReference>
<dbReference type="GO" id="GO:0002218">
    <property type="term" value="P:activation of innate immune response"/>
    <property type="evidence" value="ECO:0000315"/>
    <property type="project" value="UniProtKB"/>
</dbReference>
<dbReference type="GO" id="GO:0071360">
    <property type="term" value="P:cellular response to exogenous dsRNA"/>
    <property type="evidence" value="ECO:0000315"/>
    <property type="project" value="UniProtKB"/>
</dbReference>
<dbReference type="GO" id="GO:0051607">
    <property type="term" value="P:defense response to virus"/>
    <property type="evidence" value="ECO:0000315"/>
    <property type="project" value="UniProtKB"/>
</dbReference>
<dbReference type="GO" id="GO:0009597">
    <property type="term" value="P:detection of virus"/>
    <property type="evidence" value="ECO:0000250"/>
    <property type="project" value="UniProtKB"/>
</dbReference>
<dbReference type="GO" id="GO:0045087">
    <property type="term" value="P:innate immune response"/>
    <property type="evidence" value="ECO:0007669"/>
    <property type="project" value="UniProtKB-KW"/>
</dbReference>
<dbReference type="GO" id="GO:1900246">
    <property type="term" value="P:positive regulation of RIG-I signaling pathway"/>
    <property type="evidence" value="ECO:0000250"/>
    <property type="project" value="UniProtKB"/>
</dbReference>
<dbReference type="GO" id="GO:0032481">
    <property type="term" value="P:positive regulation of type I interferon production"/>
    <property type="evidence" value="ECO:0000315"/>
    <property type="project" value="UniProtKB"/>
</dbReference>
<dbReference type="Gene3D" id="4.10.60.10">
    <property type="entry name" value="Zinc finger, CCHC-type"/>
    <property type="match status" value="1"/>
</dbReference>
<dbReference type="InterPro" id="IPR042509">
    <property type="entry name" value="ZCCHC3"/>
</dbReference>
<dbReference type="InterPro" id="IPR001878">
    <property type="entry name" value="Znf_CCHC"/>
</dbReference>
<dbReference type="InterPro" id="IPR036875">
    <property type="entry name" value="Znf_CCHC_sf"/>
</dbReference>
<dbReference type="PANTHER" id="PTHR22639">
    <property type="entry name" value="GAG-RELATED PROTEIN"/>
    <property type="match status" value="1"/>
</dbReference>
<dbReference type="PANTHER" id="PTHR22639:SF4">
    <property type="entry name" value="ZINC FINGER CCHC DOMAIN-CONTAINING PROTEIN 3"/>
    <property type="match status" value="1"/>
</dbReference>
<dbReference type="Pfam" id="PF23057">
    <property type="entry name" value="RBD_ZCCHC3_1st"/>
    <property type="match status" value="1"/>
</dbReference>
<dbReference type="Pfam" id="PF23058">
    <property type="entry name" value="RBD_ZCCHC3_2nd"/>
    <property type="match status" value="1"/>
</dbReference>
<dbReference type="Pfam" id="PF00098">
    <property type="entry name" value="zf-CCHC"/>
    <property type="match status" value="1"/>
</dbReference>
<dbReference type="SMART" id="SM00343">
    <property type="entry name" value="ZnF_C2HC"/>
    <property type="match status" value="3"/>
</dbReference>
<dbReference type="SUPFAM" id="SSF57756">
    <property type="entry name" value="Retrovirus zinc finger-like domains"/>
    <property type="match status" value="1"/>
</dbReference>
<dbReference type="PROSITE" id="PS50158">
    <property type="entry name" value="ZF_CCHC"/>
    <property type="match status" value="2"/>
</dbReference>
<proteinExistence type="evidence at transcript level"/>
<organism>
    <name type="scientific">Mus musculus</name>
    <name type="common">Mouse</name>
    <dbReference type="NCBI Taxonomy" id="10090"/>
    <lineage>
        <taxon>Eukaryota</taxon>
        <taxon>Metazoa</taxon>
        <taxon>Chordata</taxon>
        <taxon>Craniata</taxon>
        <taxon>Vertebrata</taxon>
        <taxon>Euteleostomi</taxon>
        <taxon>Mammalia</taxon>
        <taxon>Eutheria</taxon>
        <taxon>Euarchontoglires</taxon>
        <taxon>Glires</taxon>
        <taxon>Rodentia</taxon>
        <taxon>Myomorpha</taxon>
        <taxon>Muroidea</taxon>
        <taxon>Muridae</taxon>
        <taxon>Murinae</taxon>
        <taxon>Mus</taxon>
        <taxon>Mus</taxon>
    </lineage>
</organism>